<protein>
    <recommendedName>
        <fullName>Chalcone synthase 1</fullName>
        <ecNumber>2.3.1.74</ecNumber>
    </recommendedName>
    <alternativeName>
        <fullName>Naringenin-chalcone synthase 1</fullName>
    </alternativeName>
</protein>
<name>CHS1_RUTGR</name>
<feature type="chain" id="PRO_0000216045" description="Chalcone synthase 1">
    <location>
        <begin position="1"/>
        <end position="393"/>
    </location>
</feature>
<feature type="active site" evidence="1">
    <location>
        <position position="166"/>
    </location>
</feature>
<reference key="1">
    <citation type="journal article" date="2000" name="Eur. J. Biochem.">
        <title>Specificities of functionally expressed chalcone and acridone synthases from Ruta graveolens.</title>
        <authorList>
            <person name="Springob K."/>
            <person name="Lukacin R."/>
            <person name="Ernwein C."/>
            <person name="Groening I."/>
            <person name="Matern U."/>
        </authorList>
    </citation>
    <scope>NUCLEOTIDE SEQUENCE [MRNA]</scope>
    <source>
        <tissue>Immature flower</tissue>
    </source>
</reference>
<evidence type="ECO:0000255" key="1">
    <source>
        <dbReference type="PROSITE-ProRule" id="PRU10023"/>
    </source>
</evidence>
<evidence type="ECO:0000305" key="2"/>
<sequence>MAAVTVEAIRKAQRADGPAAVLAIGTATPANYVTQADYPDYYFRITKSEHMTELKEKFKRMCDKSMIRKRYMHLTEDILKENPNMCAYMAPSLDARQDIVVVEVPKLGKEAAVKAIKEWGQPKSKITHLIFCTTSGVDMPGCDYQLTKLLGLRPSVKRFMMYQQGCFAGGTVLRLAKDLAENNRGARVLVVCSEITAVTFRGPADTHLDSLVGQALFGDGAAAVIVGADPDESIERPLYQLVSAAQTILPDSDGAIDGHLREVGLTFHLLKDVPGLISKNIEKSLKEAFGPIGISDWNSIFWIAHPGGPAILDQVEAKLGLKEEKLRATRQVLSEYGNMSSACVLFILDEMRKNCAEEGRATTGEGLDWGVLFGFGPGLTVETVVLRSVPIKA</sequence>
<dbReference type="EC" id="2.3.1.74"/>
<dbReference type="EMBL" id="AJ297789">
    <property type="protein sequence ID" value="CAC14059.1"/>
    <property type="molecule type" value="mRNA"/>
</dbReference>
<dbReference type="SMR" id="Q9FSB9"/>
<dbReference type="UniPathway" id="UPA00154"/>
<dbReference type="GO" id="GO:0016210">
    <property type="term" value="F:naringenin-chalcone synthase activity"/>
    <property type="evidence" value="ECO:0007669"/>
    <property type="project" value="UniProtKB-EC"/>
</dbReference>
<dbReference type="GO" id="GO:0009813">
    <property type="term" value="P:flavonoid biosynthetic process"/>
    <property type="evidence" value="ECO:0007669"/>
    <property type="project" value="UniProtKB-UniPathway"/>
</dbReference>
<dbReference type="GO" id="GO:0030639">
    <property type="term" value="P:polyketide biosynthetic process"/>
    <property type="evidence" value="ECO:0007669"/>
    <property type="project" value="TreeGrafter"/>
</dbReference>
<dbReference type="CDD" id="cd00831">
    <property type="entry name" value="CHS_like"/>
    <property type="match status" value="1"/>
</dbReference>
<dbReference type="FunFam" id="3.40.47.10:FF:000014">
    <property type="entry name" value="Chalcone synthase 1"/>
    <property type="match status" value="1"/>
</dbReference>
<dbReference type="FunFam" id="3.40.47.10:FF:000025">
    <property type="entry name" value="Chalcone synthase 2"/>
    <property type="match status" value="1"/>
</dbReference>
<dbReference type="Gene3D" id="3.40.47.10">
    <property type="match status" value="2"/>
</dbReference>
<dbReference type="InterPro" id="IPR012328">
    <property type="entry name" value="Chalcone/stilbene_synt_C"/>
</dbReference>
<dbReference type="InterPro" id="IPR001099">
    <property type="entry name" value="Chalcone/stilbene_synt_N"/>
</dbReference>
<dbReference type="InterPro" id="IPR018088">
    <property type="entry name" value="Chalcone/stilbene_synthase_AS"/>
</dbReference>
<dbReference type="InterPro" id="IPR011141">
    <property type="entry name" value="Polyketide_synthase_type-III"/>
</dbReference>
<dbReference type="InterPro" id="IPR016039">
    <property type="entry name" value="Thiolase-like"/>
</dbReference>
<dbReference type="PANTHER" id="PTHR11877:SF14">
    <property type="entry name" value="CHALCONE SYNTHASE"/>
    <property type="match status" value="1"/>
</dbReference>
<dbReference type="PANTHER" id="PTHR11877">
    <property type="entry name" value="HYDROXYMETHYLGLUTARYL-COA SYNTHASE"/>
    <property type="match status" value="1"/>
</dbReference>
<dbReference type="Pfam" id="PF02797">
    <property type="entry name" value="Chal_sti_synt_C"/>
    <property type="match status" value="1"/>
</dbReference>
<dbReference type="Pfam" id="PF00195">
    <property type="entry name" value="Chal_sti_synt_N"/>
    <property type="match status" value="1"/>
</dbReference>
<dbReference type="PIRSF" id="PIRSF000451">
    <property type="entry name" value="PKS_III"/>
    <property type="match status" value="1"/>
</dbReference>
<dbReference type="SUPFAM" id="SSF53901">
    <property type="entry name" value="Thiolase-like"/>
    <property type="match status" value="2"/>
</dbReference>
<dbReference type="PROSITE" id="PS00441">
    <property type="entry name" value="CHALCONE_SYNTH"/>
    <property type="match status" value="1"/>
</dbReference>
<accession>Q9FSB9</accession>
<proteinExistence type="evidence at transcript level"/>
<comment type="function">
    <text>The primary product of this enzyme is 4,2',4',6'-tetrahydroxychalcone (also termed naringenin-chalcone or chalcone) which can under specific conditions spontaneously isomerize into naringenin.</text>
</comment>
<comment type="catalytic activity">
    <reaction evidence="1">
        <text>(E)-4-coumaroyl-CoA + 3 malonyl-CoA + 3 H(+) = 2',4,4',6'-tetrahydroxychalcone + 3 CO2 + 4 CoA</text>
        <dbReference type="Rhea" id="RHEA:11128"/>
        <dbReference type="ChEBI" id="CHEBI:15378"/>
        <dbReference type="ChEBI" id="CHEBI:15413"/>
        <dbReference type="ChEBI" id="CHEBI:16526"/>
        <dbReference type="ChEBI" id="CHEBI:57287"/>
        <dbReference type="ChEBI" id="CHEBI:57384"/>
        <dbReference type="ChEBI" id="CHEBI:85008"/>
        <dbReference type="EC" id="2.3.1.74"/>
    </reaction>
</comment>
<comment type="pathway">
    <text>Secondary metabolite biosynthesis; flavonoid biosynthesis.</text>
</comment>
<comment type="similarity">
    <text evidence="2">Belongs to the thiolase-like superfamily. Chalcone/stilbene synthases family.</text>
</comment>
<organism>
    <name type="scientific">Ruta graveolens</name>
    <name type="common">Common rue</name>
    <dbReference type="NCBI Taxonomy" id="37565"/>
    <lineage>
        <taxon>Eukaryota</taxon>
        <taxon>Viridiplantae</taxon>
        <taxon>Streptophyta</taxon>
        <taxon>Embryophyta</taxon>
        <taxon>Tracheophyta</taxon>
        <taxon>Spermatophyta</taxon>
        <taxon>Magnoliopsida</taxon>
        <taxon>eudicotyledons</taxon>
        <taxon>Gunneridae</taxon>
        <taxon>Pentapetalae</taxon>
        <taxon>rosids</taxon>
        <taxon>malvids</taxon>
        <taxon>Sapindales</taxon>
        <taxon>Rutaceae</taxon>
        <taxon>Rutoideae</taxon>
        <taxon>Ruta</taxon>
    </lineage>
</organism>
<keyword id="KW-0012">Acyltransferase</keyword>
<keyword id="KW-0284">Flavonoid biosynthesis</keyword>
<keyword id="KW-0808">Transferase</keyword>
<gene>
    <name type="primary">CHS1</name>
</gene>